<dbReference type="EMBL" id="CP000826">
    <property type="protein sequence ID" value="ABV43563.1"/>
    <property type="molecule type" value="Genomic_DNA"/>
</dbReference>
<dbReference type="SMR" id="A8GKC3"/>
<dbReference type="STRING" id="399741.Spro_4469"/>
<dbReference type="KEGG" id="spe:Spro_4469"/>
<dbReference type="eggNOG" id="COG4580">
    <property type="taxonomic scope" value="Bacteria"/>
</dbReference>
<dbReference type="HOGENOM" id="CLU_032473_4_1_6"/>
<dbReference type="OrthoDB" id="106611at2"/>
<dbReference type="GO" id="GO:0009279">
    <property type="term" value="C:cell outer membrane"/>
    <property type="evidence" value="ECO:0007669"/>
    <property type="project" value="UniProtKB-SubCell"/>
</dbReference>
<dbReference type="GO" id="GO:0046930">
    <property type="term" value="C:pore complex"/>
    <property type="evidence" value="ECO:0007669"/>
    <property type="project" value="UniProtKB-KW"/>
</dbReference>
<dbReference type="GO" id="GO:0042958">
    <property type="term" value="F:maltodextrin transmembrane transporter activity"/>
    <property type="evidence" value="ECO:0007669"/>
    <property type="project" value="InterPro"/>
</dbReference>
<dbReference type="GO" id="GO:0015481">
    <property type="term" value="F:maltose transporting porin activity"/>
    <property type="evidence" value="ECO:0007669"/>
    <property type="project" value="InterPro"/>
</dbReference>
<dbReference type="GO" id="GO:0006811">
    <property type="term" value="P:monoatomic ion transport"/>
    <property type="evidence" value="ECO:0007669"/>
    <property type="project" value="UniProtKB-KW"/>
</dbReference>
<dbReference type="CDD" id="cd01346">
    <property type="entry name" value="Maltoporin-like"/>
    <property type="match status" value="1"/>
</dbReference>
<dbReference type="Gene3D" id="2.40.170.10">
    <property type="entry name" value="Porin, LamB type"/>
    <property type="match status" value="1"/>
</dbReference>
<dbReference type="HAMAP" id="MF_01301">
    <property type="entry name" value="LamB"/>
    <property type="match status" value="1"/>
</dbReference>
<dbReference type="InterPro" id="IPR050286">
    <property type="entry name" value="G_neg_Bact_CarbUptk_Porin"/>
</dbReference>
<dbReference type="InterPro" id="IPR023738">
    <property type="entry name" value="Maltoporin"/>
</dbReference>
<dbReference type="InterPro" id="IPR003192">
    <property type="entry name" value="Porin_LamB"/>
</dbReference>
<dbReference type="InterPro" id="IPR036998">
    <property type="entry name" value="Porin_LamB_sf"/>
</dbReference>
<dbReference type="NCBIfam" id="NF006860">
    <property type="entry name" value="PRK09360.1"/>
    <property type="match status" value="1"/>
</dbReference>
<dbReference type="PANTHER" id="PTHR38762">
    <property type="entry name" value="CRYPTIC OUTER MEMBRANE PORIN BGLH-RELATED"/>
    <property type="match status" value="1"/>
</dbReference>
<dbReference type="PANTHER" id="PTHR38762:SF1">
    <property type="entry name" value="CRYPTIC OUTER MEMBRANE PORIN BGLH-RELATED"/>
    <property type="match status" value="1"/>
</dbReference>
<dbReference type="Pfam" id="PF02264">
    <property type="entry name" value="LamB"/>
    <property type="match status" value="1"/>
</dbReference>
<dbReference type="SUPFAM" id="SSF56935">
    <property type="entry name" value="Porins"/>
    <property type="match status" value="1"/>
</dbReference>
<proteinExistence type="inferred from homology"/>
<feature type="signal peptide" evidence="1">
    <location>
        <begin position="1"/>
        <end position="25"/>
    </location>
</feature>
<feature type="chain" id="PRO_5000279797" description="Maltoporin">
    <location>
        <begin position="26"/>
        <end position="434"/>
    </location>
</feature>
<feature type="site" description="Greasy slide, important in sugar transport" evidence="1">
    <location>
        <position position="31"/>
    </location>
</feature>
<feature type="site" description="Greasy slide, important in sugar transport" evidence="1">
    <location>
        <position position="66"/>
    </location>
</feature>
<feature type="site" description="Greasy slide, important in sugar transport" evidence="1">
    <location>
        <position position="99"/>
    </location>
</feature>
<feature type="site" description="Important in sugar transport" evidence="1">
    <location>
        <position position="143"/>
    </location>
</feature>
<feature type="site" description="Greasy slide, important in sugar transport" evidence="1">
    <location>
        <position position="250"/>
    </location>
</feature>
<feature type="site" description="Greasy slide, important in sugar transport" evidence="1">
    <location>
        <position position="370"/>
    </location>
</feature>
<feature type="site" description="Greasy slide, important in sugar transport" evidence="1">
    <location>
        <position position="433"/>
    </location>
</feature>
<gene>
    <name evidence="1" type="primary">lamB</name>
    <name type="ordered locus">Spro_4469</name>
</gene>
<comment type="function">
    <text evidence="1">Involved in the transport of maltose and maltodextrins.</text>
</comment>
<comment type="catalytic activity">
    <reaction evidence="1">
        <text>beta-maltose(in) = beta-maltose(out)</text>
        <dbReference type="Rhea" id="RHEA:29731"/>
        <dbReference type="ChEBI" id="CHEBI:18147"/>
    </reaction>
</comment>
<comment type="subunit">
    <text evidence="1">Homotrimer formed of three 18-stranded antiparallel beta-barrels, containing three independent channels.</text>
</comment>
<comment type="subcellular location">
    <subcellularLocation>
        <location evidence="1">Cell outer membrane</location>
        <topology evidence="1">Multi-pass membrane protein</topology>
    </subcellularLocation>
</comment>
<comment type="induction">
    <text evidence="1">By maltose.</text>
</comment>
<comment type="similarity">
    <text evidence="1">Belongs to the porin LamB (TC 1.B.3) family.</text>
</comment>
<protein>
    <recommendedName>
        <fullName evidence="1">Maltoporin</fullName>
    </recommendedName>
    <alternativeName>
        <fullName evidence="1">Maltose-inducible porin</fullName>
    </alternativeName>
</protein>
<keyword id="KW-0998">Cell outer membrane</keyword>
<keyword id="KW-0406">Ion transport</keyword>
<keyword id="KW-0472">Membrane</keyword>
<keyword id="KW-0626">Porin</keyword>
<keyword id="KW-0732">Signal</keyword>
<keyword id="KW-0762">Sugar transport</keyword>
<keyword id="KW-0812">Transmembrane</keyword>
<keyword id="KW-1134">Transmembrane beta strand</keyword>
<keyword id="KW-0813">Transport</keyword>
<reference key="1">
    <citation type="submission" date="2007-09" db="EMBL/GenBank/DDBJ databases">
        <title>Complete sequence of chromosome of Serratia proteamaculans 568.</title>
        <authorList>
            <consortium name="US DOE Joint Genome Institute"/>
            <person name="Copeland A."/>
            <person name="Lucas S."/>
            <person name="Lapidus A."/>
            <person name="Barry K."/>
            <person name="Glavina del Rio T."/>
            <person name="Dalin E."/>
            <person name="Tice H."/>
            <person name="Pitluck S."/>
            <person name="Chain P."/>
            <person name="Malfatti S."/>
            <person name="Shin M."/>
            <person name="Vergez L."/>
            <person name="Schmutz J."/>
            <person name="Larimer F."/>
            <person name="Land M."/>
            <person name="Hauser L."/>
            <person name="Kyrpides N."/>
            <person name="Kim E."/>
            <person name="Taghavi S."/>
            <person name="Newman L."/>
            <person name="Vangronsveld J."/>
            <person name="van der Lelie D."/>
            <person name="Richardson P."/>
        </authorList>
    </citation>
    <scope>NUCLEOTIDE SEQUENCE [LARGE SCALE GENOMIC DNA]</scope>
    <source>
        <strain>568</strain>
    </source>
</reference>
<accession>A8GKC3</accession>
<name>LAMB_SERP5</name>
<sequence>MMTTLRKLPLALAIAAGVLTTQAMAVDFKGYARSGIGWTGSGGEQQCFKATGADSKYRLGNECETYAELKLGQEVWKEGDKSFYFDTNLAYSVSQRSDWEDVTPGFREVNVQGKNLIEWLPGANMWAGKRFYQRHDVHMIDFYYWDISGPGAGLENIDLGFGKLSAAVTRNSESGGSYGYLDNELDQRPTVNDTFDVRLAGLELNPGGTLELGLDYGRANAQDGYSLADGASKDGWLVTAEHTQSILTGYNKFVLQYATDSMTSQNNGRNQGSTIDNNGKMIRVLDHGAIDFNDQWAMMYVAMFQDIDRDNNNGSTWYTVGVRPMYKWTPIMSTLLEAGYDNVKSQRTGDRNGQYKVTLAQQWQAGNSIWSRPAIRVFATYAKWDEKWGYATSSDAEGNPGLKAGTAYNDTSMHTFSRGNDDEVTFGAQMEIWW</sequence>
<evidence type="ECO:0000255" key="1">
    <source>
        <dbReference type="HAMAP-Rule" id="MF_01301"/>
    </source>
</evidence>
<organism>
    <name type="scientific">Serratia proteamaculans (strain 568)</name>
    <dbReference type="NCBI Taxonomy" id="399741"/>
    <lineage>
        <taxon>Bacteria</taxon>
        <taxon>Pseudomonadati</taxon>
        <taxon>Pseudomonadota</taxon>
        <taxon>Gammaproteobacteria</taxon>
        <taxon>Enterobacterales</taxon>
        <taxon>Yersiniaceae</taxon>
        <taxon>Serratia</taxon>
    </lineage>
</organism>